<evidence type="ECO:0000255" key="1">
    <source>
        <dbReference type="HAMAP-Rule" id="MF_01205"/>
    </source>
</evidence>
<proteinExistence type="inferred from homology"/>
<name>YMDB_SHIDS</name>
<dbReference type="EC" id="3.1.1.106" evidence="1"/>
<dbReference type="EMBL" id="CP000034">
    <property type="protein sequence ID" value="ABB62382.1"/>
    <property type="molecule type" value="Genomic_DNA"/>
</dbReference>
<dbReference type="RefSeq" id="WP_000857417.1">
    <property type="nucleotide sequence ID" value="NC_007606.1"/>
</dbReference>
<dbReference type="RefSeq" id="YP_403873.1">
    <property type="nucleotide sequence ID" value="NC_007606.1"/>
</dbReference>
<dbReference type="SMR" id="Q32E73"/>
<dbReference type="STRING" id="300267.SDY_2305"/>
<dbReference type="EnsemblBacteria" id="ABB62382">
    <property type="protein sequence ID" value="ABB62382"/>
    <property type="gene ID" value="SDY_2305"/>
</dbReference>
<dbReference type="KEGG" id="sdy:SDY_2305"/>
<dbReference type="PATRIC" id="fig|300267.13.peg.2782"/>
<dbReference type="HOGENOM" id="CLU_046550_5_1_6"/>
<dbReference type="Proteomes" id="UP000002716">
    <property type="component" value="Chromosome"/>
</dbReference>
<dbReference type="GO" id="GO:0061463">
    <property type="term" value="F:O-acetyl-ADP-ribose deacetylase activity"/>
    <property type="evidence" value="ECO:0007669"/>
    <property type="project" value="UniProtKB-EC"/>
</dbReference>
<dbReference type="GO" id="GO:0001883">
    <property type="term" value="F:purine nucleoside binding"/>
    <property type="evidence" value="ECO:0007669"/>
    <property type="project" value="UniProtKB-UniRule"/>
</dbReference>
<dbReference type="GO" id="GO:0008428">
    <property type="term" value="F:ribonuclease inhibitor activity"/>
    <property type="evidence" value="ECO:0007669"/>
    <property type="project" value="UniProtKB-UniRule"/>
</dbReference>
<dbReference type="GO" id="GO:0042278">
    <property type="term" value="P:purine nucleoside metabolic process"/>
    <property type="evidence" value="ECO:0007669"/>
    <property type="project" value="UniProtKB-UniRule"/>
</dbReference>
<dbReference type="CDD" id="cd02908">
    <property type="entry name" value="Macro_OAADPr_deacetylase"/>
    <property type="match status" value="1"/>
</dbReference>
<dbReference type="FunFam" id="3.40.220.10:FF:000003">
    <property type="entry name" value="O-acetyl-ADP-ribose deacetylase MACROD2"/>
    <property type="match status" value="1"/>
</dbReference>
<dbReference type="Gene3D" id="3.40.220.10">
    <property type="entry name" value="Leucine Aminopeptidase, subunit E, domain 1"/>
    <property type="match status" value="1"/>
</dbReference>
<dbReference type="HAMAP" id="MF_01205">
    <property type="entry name" value="YmdB"/>
    <property type="match status" value="1"/>
</dbReference>
<dbReference type="InterPro" id="IPR002589">
    <property type="entry name" value="Macro_dom"/>
</dbReference>
<dbReference type="InterPro" id="IPR043472">
    <property type="entry name" value="Macro_dom-like"/>
</dbReference>
<dbReference type="InterPro" id="IPR024900">
    <property type="entry name" value="O-Ac-ADP-ribose_deAcase"/>
</dbReference>
<dbReference type="NCBIfam" id="NF001660">
    <property type="entry name" value="PRK00431.1-1"/>
    <property type="match status" value="1"/>
</dbReference>
<dbReference type="NCBIfam" id="NF001664">
    <property type="entry name" value="PRK00431.1-6"/>
    <property type="match status" value="1"/>
</dbReference>
<dbReference type="PANTHER" id="PTHR11106">
    <property type="entry name" value="GANGLIOSIDE INDUCED DIFFERENTIATION ASSOCIATED PROTEIN 2-RELATED"/>
    <property type="match status" value="1"/>
</dbReference>
<dbReference type="PANTHER" id="PTHR11106:SF27">
    <property type="entry name" value="MACRO DOMAIN-CONTAINING PROTEIN"/>
    <property type="match status" value="1"/>
</dbReference>
<dbReference type="Pfam" id="PF01661">
    <property type="entry name" value="Macro"/>
    <property type="match status" value="1"/>
</dbReference>
<dbReference type="SMART" id="SM00506">
    <property type="entry name" value="A1pp"/>
    <property type="match status" value="1"/>
</dbReference>
<dbReference type="SUPFAM" id="SSF52949">
    <property type="entry name" value="Macro domain-like"/>
    <property type="match status" value="1"/>
</dbReference>
<dbReference type="PROSITE" id="PS51154">
    <property type="entry name" value="MACRO"/>
    <property type="match status" value="1"/>
</dbReference>
<feature type="chain" id="PRO_0000409486" description="O-acetyl-ADP-ribose deacetylase">
    <location>
        <begin position="1"/>
        <end position="177"/>
    </location>
</feature>
<feature type="domain" description="Macro" evidence="1">
    <location>
        <begin position="1"/>
        <end position="175"/>
    </location>
</feature>
<feature type="active site" description="Proton acceptor" evidence="1">
    <location>
        <position position="35"/>
    </location>
</feature>
<feature type="binding site" evidence="1">
    <location>
        <begin position="11"/>
        <end position="12"/>
    </location>
    <ligand>
        <name>substrate</name>
    </ligand>
</feature>
<feature type="binding site" evidence="1">
    <location>
        <position position="25"/>
    </location>
    <ligand>
        <name>substrate</name>
    </ligand>
</feature>
<feature type="binding site" evidence="1">
    <location>
        <begin position="33"/>
        <end position="35"/>
    </location>
    <ligand>
        <name>substrate</name>
    </ligand>
</feature>
<feature type="binding site" evidence="1">
    <location>
        <begin position="122"/>
        <end position="126"/>
    </location>
    <ligand>
        <name>substrate</name>
    </ligand>
</feature>
<accession>Q32E73</accession>
<reference key="1">
    <citation type="journal article" date="2005" name="Nucleic Acids Res.">
        <title>Genome dynamics and diversity of Shigella species, the etiologic agents of bacillary dysentery.</title>
        <authorList>
            <person name="Yang F."/>
            <person name="Yang J."/>
            <person name="Zhang X."/>
            <person name="Chen L."/>
            <person name="Jiang Y."/>
            <person name="Yan Y."/>
            <person name="Tang X."/>
            <person name="Wang J."/>
            <person name="Xiong Z."/>
            <person name="Dong J."/>
            <person name="Xue Y."/>
            <person name="Zhu Y."/>
            <person name="Xu X."/>
            <person name="Sun L."/>
            <person name="Chen S."/>
            <person name="Nie H."/>
            <person name="Peng J."/>
            <person name="Xu J."/>
            <person name="Wang Y."/>
            <person name="Yuan Z."/>
            <person name="Wen Y."/>
            <person name="Yao Z."/>
            <person name="Shen Y."/>
            <person name="Qiang B."/>
            <person name="Hou Y."/>
            <person name="Yu J."/>
            <person name="Jin Q."/>
        </authorList>
    </citation>
    <scope>NUCLEOTIDE SEQUENCE [LARGE SCALE GENOMIC DNA]</scope>
    <source>
        <strain>Sd197</strain>
    </source>
</reference>
<protein>
    <recommendedName>
        <fullName evidence="1">O-acetyl-ADP-ribose deacetylase</fullName>
        <ecNumber evidence="1">3.1.1.106</ecNumber>
    </recommendedName>
    <alternativeName>
        <fullName evidence="1">Regulator of RNase III activity</fullName>
    </alternativeName>
</protein>
<sequence>MKTRIHVVQGDITKLAVDVIVNVTNPSLMGGGGVDGAIHRAAGPALLDACLKVRQQQGDCPTGHAVITLAGDLPAKAVVHTVGPVWRGGEQNEDQLLQDAYLNSLRLVAANSYTSVAFPAISTGVYGYPRAAAAEIAVKTVSEFITRHALPEQVYFVCYDEENAHLYERLLTQQGDE</sequence>
<comment type="function">
    <text evidence="1">Deacetylates O-acetyl-ADP ribose to yield ADP-ribose and free acetate. Down-regulates ribonuclease 3 (RNase III) activity. Acts by interacting directly with the region of the ribonuclease that is required for dimerization/activation.</text>
</comment>
<comment type="catalytic activity">
    <reaction evidence="1">
        <text>3''-O-acetyl-ADP-D-ribose + H2O = ADP-D-ribose + acetate + H(+)</text>
        <dbReference type="Rhea" id="RHEA:59244"/>
        <dbReference type="ChEBI" id="CHEBI:15377"/>
        <dbReference type="ChEBI" id="CHEBI:15378"/>
        <dbReference type="ChEBI" id="CHEBI:30089"/>
        <dbReference type="ChEBI" id="CHEBI:57967"/>
        <dbReference type="ChEBI" id="CHEBI:142723"/>
        <dbReference type="EC" id="3.1.1.106"/>
    </reaction>
</comment>
<comment type="catalytic activity">
    <reaction evidence="1">
        <text>2''-O-acetyl-ADP-D-ribose + H2O = ADP-D-ribose + acetate + H(+)</text>
        <dbReference type="Rhea" id="RHEA:57060"/>
        <dbReference type="ChEBI" id="CHEBI:15377"/>
        <dbReference type="ChEBI" id="CHEBI:15378"/>
        <dbReference type="ChEBI" id="CHEBI:30089"/>
        <dbReference type="ChEBI" id="CHEBI:57967"/>
        <dbReference type="ChEBI" id="CHEBI:83767"/>
        <dbReference type="EC" id="3.1.1.106"/>
    </reaction>
</comment>
<comment type="subunit">
    <text evidence="1">Homodimer. Interacts with RNase III.</text>
</comment>
<comment type="similarity">
    <text evidence="1">Belongs to the MacroD-type family. YmdB subfamily.</text>
</comment>
<gene>
    <name evidence="1" type="primary">ymdB</name>
    <name type="ordered locus">SDY_2305</name>
</gene>
<organism>
    <name type="scientific">Shigella dysenteriae serotype 1 (strain Sd197)</name>
    <dbReference type="NCBI Taxonomy" id="300267"/>
    <lineage>
        <taxon>Bacteria</taxon>
        <taxon>Pseudomonadati</taxon>
        <taxon>Pseudomonadota</taxon>
        <taxon>Gammaproteobacteria</taxon>
        <taxon>Enterobacterales</taxon>
        <taxon>Enterobacteriaceae</taxon>
        <taxon>Shigella</taxon>
    </lineage>
</organism>
<keyword id="KW-0378">Hydrolase</keyword>
<keyword id="KW-1185">Reference proteome</keyword>